<proteinExistence type="inferred from homology"/>
<dbReference type="EMBL" id="CP001298">
    <property type="protein sequence ID" value="ACK85642.1"/>
    <property type="molecule type" value="Genomic_DNA"/>
</dbReference>
<dbReference type="SMR" id="B7KSH4"/>
<dbReference type="KEGG" id="mch:Mchl_4877"/>
<dbReference type="HOGENOM" id="CLU_061463_1_2_5"/>
<dbReference type="Proteomes" id="UP000002385">
    <property type="component" value="Chromosome"/>
</dbReference>
<dbReference type="GO" id="GO:0005737">
    <property type="term" value="C:cytoplasm"/>
    <property type="evidence" value="ECO:0007669"/>
    <property type="project" value="UniProtKB-ARBA"/>
</dbReference>
<dbReference type="GO" id="GO:1990904">
    <property type="term" value="C:ribonucleoprotein complex"/>
    <property type="evidence" value="ECO:0007669"/>
    <property type="project" value="UniProtKB-KW"/>
</dbReference>
<dbReference type="GO" id="GO:0005840">
    <property type="term" value="C:ribosome"/>
    <property type="evidence" value="ECO:0007669"/>
    <property type="project" value="UniProtKB-KW"/>
</dbReference>
<dbReference type="GO" id="GO:0019843">
    <property type="term" value="F:rRNA binding"/>
    <property type="evidence" value="ECO:0007669"/>
    <property type="project" value="UniProtKB-UniRule"/>
</dbReference>
<dbReference type="GO" id="GO:0003735">
    <property type="term" value="F:structural constituent of ribosome"/>
    <property type="evidence" value="ECO:0007669"/>
    <property type="project" value="InterPro"/>
</dbReference>
<dbReference type="GO" id="GO:0006412">
    <property type="term" value="P:translation"/>
    <property type="evidence" value="ECO:0007669"/>
    <property type="project" value="UniProtKB-UniRule"/>
</dbReference>
<dbReference type="HAMAP" id="MF_01363">
    <property type="entry name" value="Ribosomal_bL21"/>
    <property type="match status" value="1"/>
</dbReference>
<dbReference type="InterPro" id="IPR028909">
    <property type="entry name" value="bL21-like"/>
</dbReference>
<dbReference type="InterPro" id="IPR036164">
    <property type="entry name" value="bL21-like_sf"/>
</dbReference>
<dbReference type="InterPro" id="IPR001787">
    <property type="entry name" value="Ribosomal_bL21"/>
</dbReference>
<dbReference type="NCBIfam" id="TIGR00061">
    <property type="entry name" value="L21"/>
    <property type="match status" value="1"/>
</dbReference>
<dbReference type="PANTHER" id="PTHR21349">
    <property type="entry name" value="50S RIBOSOMAL PROTEIN L21"/>
    <property type="match status" value="1"/>
</dbReference>
<dbReference type="PANTHER" id="PTHR21349:SF0">
    <property type="entry name" value="LARGE RIBOSOMAL SUBUNIT PROTEIN BL21M"/>
    <property type="match status" value="1"/>
</dbReference>
<dbReference type="Pfam" id="PF00829">
    <property type="entry name" value="Ribosomal_L21p"/>
    <property type="match status" value="1"/>
</dbReference>
<dbReference type="SUPFAM" id="SSF141091">
    <property type="entry name" value="L21p-like"/>
    <property type="match status" value="1"/>
</dbReference>
<feature type="chain" id="PRO_1000166729" description="Large ribosomal subunit protein bL21">
    <location>
        <begin position="1"/>
        <end position="130"/>
    </location>
</feature>
<feature type="region of interest" description="Disordered" evidence="2">
    <location>
        <begin position="103"/>
        <end position="130"/>
    </location>
</feature>
<feature type="compositionally biased region" description="Basic and acidic residues" evidence="2">
    <location>
        <begin position="108"/>
        <end position="120"/>
    </location>
</feature>
<feature type="compositionally biased region" description="Low complexity" evidence="2">
    <location>
        <begin position="121"/>
        <end position="130"/>
    </location>
</feature>
<sequence>MFAVIKTGGKQYRVAANDVITVATLEGEAGAAVTFGDVLLFTDGDATQVGTPLLSGIGVTGEIVQHGRTRKVIAFKKRRRQNSRRRRGHRQDFTVVRITEISAGGKTSKAEPRKTRKAEPAAESAPAAAE</sequence>
<gene>
    <name evidence="1" type="primary">rplU</name>
    <name type="ordered locus">Mchl_4877</name>
</gene>
<evidence type="ECO:0000255" key="1">
    <source>
        <dbReference type="HAMAP-Rule" id="MF_01363"/>
    </source>
</evidence>
<evidence type="ECO:0000256" key="2">
    <source>
        <dbReference type="SAM" id="MobiDB-lite"/>
    </source>
</evidence>
<evidence type="ECO:0000305" key="3"/>
<protein>
    <recommendedName>
        <fullName evidence="1">Large ribosomal subunit protein bL21</fullName>
    </recommendedName>
    <alternativeName>
        <fullName evidence="3">50S ribosomal protein L21</fullName>
    </alternativeName>
</protein>
<organism>
    <name type="scientific">Methylorubrum extorquens (strain CM4 / NCIMB 13688)</name>
    <name type="common">Methylobacterium extorquens</name>
    <dbReference type="NCBI Taxonomy" id="440085"/>
    <lineage>
        <taxon>Bacteria</taxon>
        <taxon>Pseudomonadati</taxon>
        <taxon>Pseudomonadota</taxon>
        <taxon>Alphaproteobacteria</taxon>
        <taxon>Hyphomicrobiales</taxon>
        <taxon>Methylobacteriaceae</taxon>
        <taxon>Methylorubrum</taxon>
    </lineage>
</organism>
<reference key="1">
    <citation type="submission" date="2008-12" db="EMBL/GenBank/DDBJ databases">
        <title>Complete sequence of chromosome of Methylobacterium chloromethanicum CM4.</title>
        <authorList>
            <consortium name="US DOE Joint Genome Institute"/>
            <person name="Lucas S."/>
            <person name="Copeland A."/>
            <person name="Lapidus A."/>
            <person name="Glavina del Rio T."/>
            <person name="Dalin E."/>
            <person name="Tice H."/>
            <person name="Bruce D."/>
            <person name="Goodwin L."/>
            <person name="Pitluck S."/>
            <person name="Chertkov O."/>
            <person name="Brettin T."/>
            <person name="Detter J.C."/>
            <person name="Han C."/>
            <person name="Larimer F."/>
            <person name="Land M."/>
            <person name="Hauser L."/>
            <person name="Kyrpides N."/>
            <person name="Mikhailova N."/>
            <person name="Marx C."/>
            <person name="Richardson P."/>
        </authorList>
    </citation>
    <scope>NUCLEOTIDE SEQUENCE [LARGE SCALE GENOMIC DNA]</scope>
    <source>
        <strain>CM4 / NCIMB 13688</strain>
    </source>
</reference>
<comment type="function">
    <text evidence="1">This protein binds to 23S rRNA in the presence of protein L20.</text>
</comment>
<comment type="subunit">
    <text evidence="1">Part of the 50S ribosomal subunit. Contacts protein L20.</text>
</comment>
<comment type="similarity">
    <text evidence="1">Belongs to the bacterial ribosomal protein bL21 family.</text>
</comment>
<name>RL21_METC4</name>
<keyword id="KW-0687">Ribonucleoprotein</keyword>
<keyword id="KW-0689">Ribosomal protein</keyword>
<keyword id="KW-0694">RNA-binding</keyword>
<keyword id="KW-0699">rRNA-binding</keyword>
<accession>B7KSH4</accession>